<feature type="chain" id="PRO_1000212627" description="High frequency lysogenization protein HflD homolog">
    <location>
        <begin position="1"/>
        <end position="208"/>
    </location>
</feature>
<accession>C5B8C1</accession>
<protein>
    <recommendedName>
        <fullName evidence="1">High frequency lysogenization protein HflD homolog</fullName>
    </recommendedName>
</protein>
<name>HFLD_EDWI9</name>
<comment type="subcellular location">
    <subcellularLocation>
        <location>Cytoplasm</location>
    </subcellularLocation>
    <subcellularLocation>
        <location evidence="1">Cell inner membrane</location>
        <topology evidence="1">Peripheral membrane protein</topology>
        <orientation evidence="1">Cytoplasmic side</orientation>
    </subcellularLocation>
</comment>
<comment type="similarity">
    <text evidence="1">Belongs to the HflD family.</text>
</comment>
<gene>
    <name evidence="1" type="primary">hflD</name>
    <name type="ordered locus">NT01EI_2320</name>
</gene>
<sequence>MAKNYYDITLALAGICQSARLVQQLAHDGQCDNVALRTSLSSILQTDPPNTLAVFGDHERVLKPGLETLLNVLNANRQGPGAELTRYCLSLMLLERKLFGHPQALRTLSERIGELDRQLAHFDLESDTIVSALAAIYVDVISPLGPRIQVTGSPAVLQNALVQARVRAALLAGIRAGILWQQVGGSRLQLMFSRNRLFQMAQNLLTHS</sequence>
<organism>
    <name type="scientific">Edwardsiella ictaluri (strain 93-146)</name>
    <dbReference type="NCBI Taxonomy" id="634503"/>
    <lineage>
        <taxon>Bacteria</taxon>
        <taxon>Pseudomonadati</taxon>
        <taxon>Pseudomonadota</taxon>
        <taxon>Gammaproteobacteria</taxon>
        <taxon>Enterobacterales</taxon>
        <taxon>Hafniaceae</taxon>
        <taxon>Edwardsiella</taxon>
    </lineage>
</organism>
<dbReference type="EMBL" id="CP001600">
    <property type="protein sequence ID" value="ACR69491.1"/>
    <property type="molecule type" value="Genomic_DNA"/>
</dbReference>
<dbReference type="RefSeq" id="WP_015871610.1">
    <property type="nucleotide sequence ID" value="NZ_CP169062.1"/>
</dbReference>
<dbReference type="SMR" id="C5B8C1"/>
<dbReference type="STRING" id="67780.B6E78_03860"/>
<dbReference type="GeneID" id="69539254"/>
<dbReference type="KEGG" id="eic:NT01EI_2320"/>
<dbReference type="PATRIC" id="fig|634503.3.peg.2053"/>
<dbReference type="HOGENOM" id="CLU_098920_0_0_6"/>
<dbReference type="OrthoDB" id="9788031at2"/>
<dbReference type="Proteomes" id="UP000001485">
    <property type="component" value="Chromosome"/>
</dbReference>
<dbReference type="GO" id="GO:0005737">
    <property type="term" value="C:cytoplasm"/>
    <property type="evidence" value="ECO:0007669"/>
    <property type="project" value="UniProtKB-SubCell"/>
</dbReference>
<dbReference type="GO" id="GO:0005886">
    <property type="term" value="C:plasma membrane"/>
    <property type="evidence" value="ECO:0007669"/>
    <property type="project" value="UniProtKB-SubCell"/>
</dbReference>
<dbReference type="FunFam" id="1.10.3890.10:FF:000001">
    <property type="entry name" value="High frequency lysogenization protein HflD homolog"/>
    <property type="match status" value="1"/>
</dbReference>
<dbReference type="Gene3D" id="1.10.3890.10">
    <property type="entry name" value="HflD-like"/>
    <property type="match status" value="1"/>
</dbReference>
<dbReference type="HAMAP" id="MF_00695">
    <property type="entry name" value="HflD_protein"/>
    <property type="match status" value="1"/>
</dbReference>
<dbReference type="InterPro" id="IPR007451">
    <property type="entry name" value="HflD"/>
</dbReference>
<dbReference type="InterPro" id="IPR035932">
    <property type="entry name" value="HflD-like_sf"/>
</dbReference>
<dbReference type="NCBIfam" id="NF001246">
    <property type="entry name" value="PRK00218.1-2"/>
    <property type="match status" value="1"/>
</dbReference>
<dbReference type="NCBIfam" id="NF001248">
    <property type="entry name" value="PRK00218.1-4"/>
    <property type="match status" value="1"/>
</dbReference>
<dbReference type="NCBIfam" id="NF001249">
    <property type="entry name" value="PRK00218.1-5"/>
    <property type="match status" value="1"/>
</dbReference>
<dbReference type="PANTHER" id="PTHR38100">
    <property type="entry name" value="HIGH FREQUENCY LYSOGENIZATION PROTEIN HFLD"/>
    <property type="match status" value="1"/>
</dbReference>
<dbReference type="PANTHER" id="PTHR38100:SF1">
    <property type="entry name" value="HIGH FREQUENCY LYSOGENIZATION PROTEIN HFLD"/>
    <property type="match status" value="1"/>
</dbReference>
<dbReference type="Pfam" id="PF04356">
    <property type="entry name" value="DUF489"/>
    <property type="match status" value="1"/>
</dbReference>
<dbReference type="SUPFAM" id="SSF101322">
    <property type="entry name" value="YcfC-like"/>
    <property type="match status" value="1"/>
</dbReference>
<reference key="1">
    <citation type="submission" date="2009-03" db="EMBL/GenBank/DDBJ databases">
        <title>Complete genome sequence of Edwardsiella ictaluri 93-146.</title>
        <authorList>
            <person name="Williams M.L."/>
            <person name="Gillaspy A.F."/>
            <person name="Dyer D.W."/>
            <person name="Thune R.L."/>
            <person name="Waldbieser G.C."/>
            <person name="Schuster S.C."/>
            <person name="Gipson J."/>
            <person name="Zaitshik J."/>
            <person name="Landry C."/>
            <person name="Lawrence M.L."/>
        </authorList>
    </citation>
    <scope>NUCLEOTIDE SEQUENCE [LARGE SCALE GENOMIC DNA]</scope>
    <source>
        <strain>93-146</strain>
    </source>
</reference>
<keyword id="KW-0997">Cell inner membrane</keyword>
<keyword id="KW-1003">Cell membrane</keyword>
<keyword id="KW-0963">Cytoplasm</keyword>
<keyword id="KW-0472">Membrane</keyword>
<evidence type="ECO:0000255" key="1">
    <source>
        <dbReference type="HAMAP-Rule" id="MF_00695"/>
    </source>
</evidence>
<proteinExistence type="inferred from homology"/>